<sequence>HHDHHAAVGGGGGGGGGA</sequence>
<organism>
    <name type="scientific">Bothrops fonsecai</name>
    <name type="common">Fonseca's lancehead</name>
    <name type="synonym">Rhinocerophis fonsecai</name>
    <dbReference type="NCBI Taxonomy" id="157549"/>
    <lineage>
        <taxon>Eukaryota</taxon>
        <taxon>Metazoa</taxon>
        <taxon>Chordata</taxon>
        <taxon>Craniata</taxon>
        <taxon>Vertebrata</taxon>
        <taxon>Euteleostomi</taxon>
        <taxon>Lepidosauria</taxon>
        <taxon>Squamata</taxon>
        <taxon>Bifurcata</taxon>
        <taxon>Unidentata</taxon>
        <taxon>Episquamata</taxon>
        <taxon>Toxicofera</taxon>
        <taxon>Serpentes</taxon>
        <taxon>Colubroidea</taxon>
        <taxon>Viperidae</taxon>
        <taxon>Crotalinae</taxon>
        <taxon>Bothrops</taxon>
    </lineage>
</organism>
<protein>
    <recommendedName>
        <fullName>Poly-His-poly-Gly peptide 1</fullName>
        <shortName>pHpG-1</shortName>
    </recommendedName>
</protein>
<evidence type="ECO:0000250" key="1">
    <source>
        <dbReference type="UniProtKB" id="A8YPR6"/>
    </source>
</evidence>
<evidence type="ECO:0000269" key="2">
    <source>
    </source>
</evidence>
<evidence type="ECO:0000305" key="3"/>
<feature type="peptide" id="PRO_0000421922" description="Poly-His-poly-Gly peptide 1">
    <location>
        <begin position="1"/>
        <end position="18"/>
    </location>
</feature>
<proteinExistence type="evidence at protein level"/>
<reference key="1">
    <citation type="journal article" date="2012" name="Mol. Cell. Proteomics">
        <title>Peptidomics of three Bothrops snake venoms: insights into the molecular diversification of proteomes and peptidomes.</title>
        <authorList>
            <person name="Tashima A.K."/>
            <person name="Zelanis A."/>
            <person name="Kitano E.S."/>
            <person name="Ianzer D."/>
            <person name="Melo R.L."/>
            <person name="Rioli V."/>
            <person name="Sant'anna S.S."/>
            <person name="Schenberg A.C."/>
            <person name="Camargo A.C."/>
            <person name="Serrano S.M.T."/>
        </authorList>
    </citation>
    <scope>PROTEIN SEQUENCE</scope>
    <scope>MASS SPECTROMETRY</scope>
    <source>
        <tissue>Venom</tissue>
    </source>
</reference>
<comment type="function">
    <text evidence="1">May serve as a metalloproteinase inhibitor during glandular storage. Their inhibition may be instantly disengaged, by dilution or physiochemical change, when venom is injected into tissue of the victim.</text>
</comment>
<comment type="subcellular location">
    <subcellularLocation>
        <location>Secreted</location>
    </subcellularLocation>
</comment>
<comment type="tissue specificity">
    <text>Expressed by the venom gland.</text>
</comment>
<comment type="mass spectrometry"/>
<comment type="miscellaneous">
    <text>Poly-His-poly-Gly peptide are encoded by two gene families: snake venom metalloprotease inhibitors and bradykinin-potentiating-C-type natriuretic peptides (BPP-CNP).</text>
</comment>
<comment type="similarity">
    <text evidence="3">Belongs to the pHpG family.</text>
</comment>
<name>SVMI_BOTFO</name>
<keyword id="KW-0903">Direct protein sequencing</keyword>
<keyword id="KW-0964">Secreted</keyword>
<accession>P0DL08</accession>
<dbReference type="GO" id="GO:0005576">
    <property type="term" value="C:extracellular region"/>
    <property type="evidence" value="ECO:0007669"/>
    <property type="project" value="UniProtKB-SubCell"/>
</dbReference>